<dbReference type="EMBL" id="AF110402">
    <property type="protein sequence ID" value="AAD24432.1"/>
    <property type="molecule type" value="mRNA"/>
</dbReference>
<dbReference type="EMBL" id="Y18017">
    <property type="protein sequence ID" value="CAB53861.1"/>
    <property type="status" value="ALT_INIT"/>
    <property type="molecule type" value="mRNA"/>
</dbReference>
<dbReference type="RefSeq" id="NP_776476.2">
    <property type="nucleotide sequence ID" value="NM_174051.3"/>
</dbReference>
<dbReference type="RefSeq" id="XP_010807738.1">
    <property type="nucleotide sequence ID" value="XM_010809436.4"/>
</dbReference>
<dbReference type="SMR" id="Q9XSB5"/>
<dbReference type="FunCoup" id="Q9XSB5">
    <property type="interactions" value="264"/>
</dbReference>
<dbReference type="STRING" id="9913.ENSBTAP00000005899"/>
<dbReference type="ChEMBL" id="CHEMBL2404"/>
<dbReference type="PaxDb" id="9913-ENSBTAP00000005899"/>
<dbReference type="Ensembl" id="ENSBTAT00000005899.5">
    <property type="protein sequence ID" value="ENSBTAP00000005899.4"/>
    <property type="gene ID" value="ENSBTAG00000004498.6"/>
</dbReference>
<dbReference type="GeneID" id="281146"/>
<dbReference type="KEGG" id="bta:281146"/>
<dbReference type="CTD" id="2100"/>
<dbReference type="VEuPathDB" id="HostDB:ENSBTAG00000004498"/>
<dbReference type="VGNC" id="VGNC:28605">
    <property type="gene designation" value="ESR2"/>
</dbReference>
<dbReference type="eggNOG" id="KOG3575">
    <property type="taxonomic scope" value="Eukaryota"/>
</dbReference>
<dbReference type="GeneTree" id="ENSGT00940000156116"/>
<dbReference type="HOGENOM" id="CLU_007368_11_1_1"/>
<dbReference type="InParanoid" id="Q9XSB5"/>
<dbReference type="OMA" id="DPHSHGM"/>
<dbReference type="OrthoDB" id="5799427at2759"/>
<dbReference type="TreeFam" id="TF323751"/>
<dbReference type="Reactome" id="R-BTA-1257604">
    <property type="pathway name" value="PIP3 activates AKT signaling"/>
</dbReference>
<dbReference type="Reactome" id="R-BTA-383280">
    <property type="pathway name" value="Nuclear Receptor transcription pathway"/>
</dbReference>
<dbReference type="Reactome" id="R-BTA-6811558">
    <property type="pathway name" value="PI5P, PP2A and IER3 Regulate PI3K/AKT Signaling"/>
</dbReference>
<dbReference type="Reactome" id="R-BTA-8939211">
    <property type="pathway name" value="ESR-mediated signaling"/>
</dbReference>
<dbReference type="Reactome" id="R-BTA-9009391">
    <property type="pathway name" value="Extra-nuclear estrogen signaling"/>
</dbReference>
<dbReference type="PRO" id="PR:Q9XSB5"/>
<dbReference type="Proteomes" id="UP000009136">
    <property type="component" value="Chromosome 10"/>
</dbReference>
<dbReference type="Bgee" id="ENSBTAG00000004498">
    <property type="expression patterns" value="Expressed in oviduct epithelium and 37 other cell types or tissues"/>
</dbReference>
<dbReference type="GO" id="GO:0000785">
    <property type="term" value="C:chromatin"/>
    <property type="evidence" value="ECO:0000318"/>
    <property type="project" value="GO_Central"/>
</dbReference>
<dbReference type="GO" id="GO:0005739">
    <property type="term" value="C:mitochondrion"/>
    <property type="evidence" value="ECO:0007669"/>
    <property type="project" value="Ensembl"/>
</dbReference>
<dbReference type="GO" id="GO:0005654">
    <property type="term" value="C:nucleoplasm"/>
    <property type="evidence" value="ECO:0007669"/>
    <property type="project" value="Ensembl"/>
</dbReference>
<dbReference type="GO" id="GO:0005634">
    <property type="term" value="C:nucleus"/>
    <property type="evidence" value="ECO:0000250"/>
    <property type="project" value="UniProtKB"/>
</dbReference>
<dbReference type="GO" id="GO:0019899">
    <property type="term" value="F:enzyme binding"/>
    <property type="evidence" value="ECO:0007669"/>
    <property type="project" value="Ensembl"/>
</dbReference>
<dbReference type="GO" id="GO:0034056">
    <property type="term" value="F:estrogen response element binding"/>
    <property type="evidence" value="ECO:0000318"/>
    <property type="project" value="GO_Central"/>
</dbReference>
<dbReference type="GO" id="GO:0030284">
    <property type="term" value="F:nuclear estrogen receptor activity"/>
    <property type="evidence" value="ECO:0007669"/>
    <property type="project" value="Ensembl"/>
</dbReference>
<dbReference type="GO" id="GO:0004879">
    <property type="term" value="F:nuclear receptor activity"/>
    <property type="evidence" value="ECO:0000318"/>
    <property type="project" value="GO_Central"/>
</dbReference>
<dbReference type="GO" id="GO:0005496">
    <property type="term" value="F:steroid binding"/>
    <property type="evidence" value="ECO:0000250"/>
    <property type="project" value="UniProtKB"/>
</dbReference>
<dbReference type="GO" id="GO:0008270">
    <property type="term" value="F:zinc ion binding"/>
    <property type="evidence" value="ECO:0007669"/>
    <property type="project" value="UniProtKB-KW"/>
</dbReference>
<dbReference type="GO" id="GO:0071392">
    <property type="term" value="P:cellular response to estradiol stimulus"/>
    <property type="evidence" value="ECO:0007669"/>
    <property type="project" value="InterPro"/>
</dbReference>
<dbReference type="GO" id="GO:0030520">
    <property type="term" value="P:estrogen receptor signaling pathway"/>
    <property type="evidence" value="ECO:0000318"/>
    <property type="project" value="GO_Central"/>
</dbReference>
<dbReference type="GO" id="GO:0000122">
    <property type="term" value="P:negative regulation of transcription by RNA polymerase II"/>
    <property type="evidence" value="ECO:0007669"/>
    <property type="project" value="Ensembl"/>
</dbReference>
<dbReference type="GO" id="GO:0045893">
    <property type="term" value="P:positive regulation of DNA-templated transcription"/>
    <property type="evidence" value="ECO:0000250"/>
    <property type="project" value="UniProtKB"/>
</dbReference>
<dbReference type="GO" id="GO:0006357">
    <property type="term" value="P:regulation of transcription by RNA polymerase II"/>
    <property type="evidence" value="ECO:0000318"/>
    <property type="project" value="GO_Central"/>
</dbReference>
<dbReference type="CDD" id="cd07171">
    <property type="entry name" value="NR_DBD_ER"/>
    <property type="match status" value="1"/>
</dbReference>
<dbReference type="CDD" id="cd06949">
    <property type="entry name" value="NR_LBD_ER"/>
    <property type="match status" value="1"/>
</dbReference>
<dbReference type="FunFam" id="1.10.565.10:FF:000010">
    <property type="entry name" value="Estrogen receptor"/>
    <property type="match status" value="1"/>
</dbReference>
<dbReference type="FunFam" id="3.30.50.10:FF:000014">
    <property type="entry name" value="Estrogen receptor beta"/>
    <property type="match status" value="1"/>
</dbReference>
<dbReference type="Gene3D" id="3.30.50.10">
    <property type="entry name" value="Erythroid Transcription Factor GATA-1, subunit A"/>
    <property type="match status" value="1"/>
</dbReference>
<dbReference type="Gene3D" id="1.10.565.10">
    <property type="entry name" value="Retinoid X Receptor"/>
    <property type="match status" value="1"/>
</dbReference>
<dbReference type="InterPro" id="IPR021064">
    <property type="entry name" value="ER-beta-like_N"/>
</dbReference>
<dbReference type="InterPro" id="IPR028355">
    <property type="entry name" value="ER-beta/gamma"/>
</dbReference>
<dbReference type="InterPro" id="IPR024178">
    <property type="entry name" value="Est_rcpt/est-rel_rcp"/>
</dbReference>
<dbReference type="InterPro" id="IPR035500">
    <property type="entry name" value="NHR-like_dom_sf"/>
</dbReference>
<dbReference type="InterPro" id="IPR000536">
    <property type="entry name" value="Nucl_hrmn_rcpt_lig-bd"/>
</dbReference>
<dbReference type="InterPro" id="IPR050200">
    <property type="entry name" value="Nuclear_hormone_rcpt_NR3"/>
</dbReference>
<dbReference type="InterPro" id="IPR001723">
    <property type="entry name" value="Nuclear_hrmn_rcpt"/>
</dbReference>
<dbReference type="InterPro" id="IPR001628">
    <property type="entry name" value="Znf_hrmn_rcpt"/>
</dbReference>
<dbReference type="InterPro" id="IPR013088">
    <property type="entry name" value="Znf_NHR/GATA"/>
</dbReference>
<dbReference type="PANTHER" id="PTHR48092">
    <property type="entry name" value="KNIRPS-RELATED PROTEIN-RELATED"/>
    <property type="match status" value="1"/>
</dbReference>
<dbReference type="Pfam" id="PF12497">
    <property type="entry name" value="ERbeta_N"/>
    <property type="match status" value="1"/>
</dbReference>
<dbReference type="Pfam" id="PF00104">
    <property type="entry name" value="Hormone_recep"/>
    <property type="match status" value="1"/>
</dbReference>
<dbReference type="Pfam" id="PF00105">
    <property type="entry name" value="zf-C4"/>
    <property type="match status" value="1"/>
</dbReference>
<dbReference type="PIRSF" id="PIRSF500102">
    <property type="entry name" value="ER-b"/>
    <property type="match status" value="1"/>
</dbReference>
<dbReference type="PIRSF" id="PIRSF002527">
    <property type="entry name" value="ER-like_NR"/>
    <property type="match status" value="1"/>
</dbReference>
<dbReference type="PRINTS" id="PR00398">
    <property type="entry name" value="STRDHORMONER"/>
</dbReference>
<dbReference type="PRINTS" id="PR00047">
    <property type="entry name" value="STROIDFINGER"/>
</dbReference>
<dbReference type="SMART" id="SM00430">
    <property type="entry name" value="HOLI"/>
    <property type="match status" value="1"/>
</dbReference>
<dbReference type="SMART" id="SM00399">
    <property type="entry name" value="ZnF_C4"/>
    <property type="match status" value="1"/>
</dbReference>
<dbReference type="SUPFAM" id="SSF57716">
    <property type="entry name" value="Glucocorticoid receptor-like (DNA-binding domain)"/>
    <property type="match status" value="1"/>
</dbReference>
<dbReference type="SUPFAM" id="SSF48508">
    <property type="entry name" value="Nuclear receptor ligand-binding domain"/>
    <property type="match status" value="1"/>
</dbReference>
<dbReference type="PROSITE" id="PS51843">
    <property type="entry name" value="NR_LBD"/>
    <property type="match status" value="1"/>
</dbReference>
<dbReference type="PROSITE" id="PS00031">
    <property type="entry name" value="NUCLEAR_REC_DBD_1"/>
    <property type="match status" value="1"/>
</dbReference>
<dbReference type="PROSITE" id="PS51030">
    <property type="entry name" value="NUCLEAR_REC_DBD_2"/>
    <property type="match status" value="1"/>
</dbReference>
<keyword id="KW-0010">Activator</keyword>
<keyword id="KW-0238">DNA-binding</keyword>
<keyword id="KW-0446">Lipid-binding</keyword>
<keyword id="KW-0479">Metal-binding</keyword>
<keyword id="KW-0539">Nucleus</keyword>
<keyword id="KW-0597">Phosphoprotein</keyword>
<keyword id="KW-0675">Receptor</keyword>
<keyword id="KW-1185">Reference proteome</keyword>
<keyword id="KW-0754">Steroid-binding</keyword>
<keyword id="KW-0804">Transcription</keyword>
<keyword id="KW-0805">Transcription regulation</keyword>
<keyword id="KW-0862">Zinc</keyword>
<keyword id="KW-0863">Zinc-finger</keyword>
<evidence type="ECO:0000250" key="1"/>
<evidence type="ECO:0000250" key="2">
    <source>
        <dbReference type="UniProtKB" id="O08537"/>
    </source>
</evidence>
<evidence type="ECO:0000250" key="3">
    <source>
        <dbReference type="UniProtKB" id="Q62986"/>
    </source>
</evidence>
<evidence type="ECO:0000250" key="4">
    <source>
        <dbReference type="UniProtKB" id="Q92731"/>
    </source>
</evidence>
<evidence type="ECO:0000255" key="5">
    <source>
        <dbReference type="PROSITE-ProRule" id="PRU00407"/>
    </source>
</evidence>
<evidence type="ECO:0000255" key="6">
    <source>
        <dbReference type="PROSITE-ProRule" id="PRU01189"/>
    </source>
</evidence>
<evidence type="ECO:0000269" key="7">
    <source>
    </source>
</evidence>
<evidence type="ECO:0000305" key="8"/>
<feature type="chain" id="PRO_0000053640" description="Estrogen receptor beta">
    <location>
        <begin position="1"/>
        <end position="527"/>
    </location>
</feature>
<feature type="domain" description="NR LBD" evidence="6">
    <location>
        <begin position="261"/>
        <end position="495"/>
    </location>
</feature>
<feature type="DNA-binding region" description="Nuclear receptor" evidence="5">
    <location>
        <begin position="146"/>
        <end position="211"/>
    </location>
</feature>
<feature type="zinc finger region" description="NR C4-type" evidence="5">
    <location>
        <begin position="146"/>
        <end position="166"/>
    </location>
</feature>
<feature type="zinc finger region" description="NR C4-type" evidence="5">
    <location>
        <begin position="182"/>
        <end position="206"/>
    </location>
</feature>
<feature type="region of interest" description="Modulating">
    <location>
        <begin position="1"/>
        <end position="145"/>
    </location>
</feature>
<feature type="modified residue" description="Phosphoserine; by MAPK" evidence="2">
    <location>
        <position position="84"/>
    </location>
</feature>
<feature type="modified residue" description="Phosphoserine; by MAPK" evidence="2">
    <location>
        <position position="102"/>
    </location>
</feature>
<feature type="sequence conflict" description="In Ref. 2; CAB53861." evidence="8" ref="2">
    <original>N</original>
    <variation>D</variation>
    <location>
        <position position="60"/>
    </location>
</feature>
<organism>
    <name type="scientific">Bos taurus</name>
    <name type="common">Bovine</name>
    <dbReference type="NCBI Taxonomy" id="9913"/>
    <lineage>
        <taxon>Eukaryota</taxon>
        <taxon>Metazoa</taxon>
        <taxon>Chordata</taxon>
        <taxon>Craniata</taxon>
        <taxon>Vertebrata</taxon>
        <taxon>Euteleostomi</taxon>
        <taxon>Mammalia</taxon>
        <taxon>Eutheria</taxon>
        <taxon>Laurasiatheria</taxon>
        <taxon>Artiodactyla</taxon>
        <taxon>Ruminantia</taxon>
        <taxon>Pecora</taxon>
        <taxon>Bovidae</taxon>
        <taxon>Bovinae</taxon>
        <taxon>Bos</taxon>
    </lineage>
</organism>
<name>ESR2_BOVIN</name>
<protein>
    <recommendedName>
        <fullName>Estrogen receptor beta</fullName>
        <shortName>ER-beta</shortName>
    </recommendedName>
    <alternativeName>
        <fullName>Nuclear receptor subfamily 3 group A member 2</fullName>
    </alternativeName>
</protein>
<gene>
    <name type="primary">ESR2</name>
    <name type="synonym">NR3A2</name>
</gene>
<proteinExistence type="evidence at transcript level"/>
<reference key="1">
    <citation type="journal article" date="1999" name="Biol. Reprod.">
        <title>Cloning, sequencing, and localization of bovine estrogen receptor-beta within the ovarian follicle.</title>
        <authorList>
            <person name="Rosenfeld C.S."/>
            <person name="Yuan X."/>
            <person name="Manikkam M."/>
            <person name="Calder M.D."/>
            <person name="Garverick H.A."/>
            <person name="Lubahn D.B."/>
        </authorList>
    </citation>
    <scope>NUCLEOTIDE SEQUENCE [MRNA]</scope>
    <scope>TISSUE SPECIFICITY</scope>
    <source>
        <strain>Holstein</strain>
        <tissue>Ovarian follicle</tissue>
    </source>
</reference>
<reference key="2">
    <citation type="journal article" date="1999" name="Mol. Cell. Endocrinol.">
        <title>Cloning of bovine estrogen receptor beta (Erbeta): expression of novel deleted isoforms in reproductive tissues.</title>
        <authorList>
            <person name="Walther N."/>
            <person name="Lioutas C."/>
            <person name="Tillmann G."/>
            <person name="Ivell R."/>
        </authorList>
    </citation>
    <scope>NUCLEOTIDE SEQUENCE [MRNA] OF 4-527</scope>
</reference>
<comment type="function">
    <text evidence="4">Nuclear hormone receptor. Binds estrogens with an affinity similar to that of ESR1ESR1/ER-alpha, and activates expression of reporter genes containing estrogen response elements (ERE) in an estrogen-dependent manner.</text>
</comment>
<comment type="subunit">
    <text evidence="2 3 4">Binds DNA as a homodimer. Can form a heterodimer with ESR1. Interacts with NCOA1, NCOA3, NCOA5 and NCOA6 coactivators, leading to a strong increase of transcription of target genes. Interacts with UBE1C and AKAP13. Interacts with DNTTIP2. Interacts with CCDC62 in the presence of estradiol/E2; this interaction seems to enhance the transcription of target genes. Interacts with DNAAF4. Interacts with PRMT2. Interacts with CCAR2 (via N-terminus) in a ligand-independent manner. Interacts with RBM39, in the presence of estradiol (E2). Interacts with STUB1/CHIP (By similarity).</text>
</comment>
<comment type="subcellular location">
    <subcellularLocation>
        <location evidence="4">Nucleus</location>
    </subcellularLocation>
</comment>
<comment type="tissue specificity">
    <text evidence="7">Present in granulosa cells of antral follicles in various stages of follicular growth.</text>
</comment>
<comment type="domain">
    <text>Composed of three domains: a modulating N-terminal domain, a DNA-binding domain and a C-terminal ligand-binding domain.</text>
</comment>
<comment type="PTM">
    <text evidence="1">Phosphorylation at Ser-84 and Ser-102 recruits NCOA1.</text>
</comment>
<comment type="similarity">
    <text evidence="8">Belongs to the nuclear hormone receptor family. NR3 subfamily.</text>
</comment>
<comment type="sequence caution" evidence="8">
    <conflict type="erroneous initiation">
        <sequence resource="EMBL-CDS" id="CAB53861"/>
    </conflict>
    <text>Truncated N-terminus.</text>
</comment>
<accession>Q9XSB5</accession>
<accession>Q9TTS2</accession>
<sequence length="527" mass="59032">MDVKNSPSSLNSPVSYNCGQSILPLEPGPIYLPSSYVESRHEYSAVTFYSPAVMNYSIPNNSEDGPGRQTTSPNVLWPTPGHLSPLAIHCQPSVLYAEPQKSPWRETRSLEHTLPVNRETLKRKASGSSCASPATSPSSKRDAHFCAVCSDYASGYHYGVWSCEGCKAFFKRSIQGHNDYICPATNQCTIDKNRRKSCQACRLRKCYEVGMVKCGSRRERCGYRIVRRQRNSDEQLHCLSKTKRNGGPMTRVKELLLSALSPEQLVLTLLEAEPPHVLISRPSTPFTEASMMMSLTKLADKELVHMISWAKKIPGFVELSLYDQVRLLESCWLEVLMVGLMWRSIDHPGKLIFAPDLILDRDEGKCVEGILEIFDMLLATTSRFRELKLQHKEYLCVKAMILLNSSMYPSATAPQEADSGRKLTHLLNAVTDALVWVIAKSGMSSQQQSMRLANLLMLLSHVRHASNKGMEHLLNMKCKNVVPVYDLLLEMLNAHTLRGNKSLVTGSERNLVEDSESKEGSQKPQAQ</sequence>